<gene>
    <name evidence="1" type="primary">mtaD</name>
    <name type="ordered locus">PF1538</name>
</gene>
<comment type="function">
    <text evidence="1">Catalyzes the deamination of 5-methylthioadenosine and S-adenosyl-L-homocysteine into 5-methylthioinosine and S-inosyl-L-homocysteine, respectively. Is also able to deaminate adenosine.</text>
</comment>
<comment type="catalytic activity">
    <reaction evidence="1">
        <text>S-adenosyl-L-homocysteine + H2O + H(+) = S-inosyl-L-homocysteine + NH4(+)</text>
        <dbReference type="Rhea" id="RHEA:20716"/>
        <dbReference type="ChEBI" id="CHEBI:15377"/>
        <dbReference type="ChEBI" id="CHEBI:15378"/>
        <dbReference type="ChEBI" id="CHEBI:28938"/>
        <dbReference type="ChEBI" id="CHEBI:57856"/>
        <dbReference type="ChEBI" id="CHEBI:57985"/>
        <dbReference type="EC" id="3.5.4.28"/>
    </reaction>
</comment>
<comment type="catalytic activity">
    <reaction evidence="1">
        <text>S-methyl-5'-thioadenosine + H2O + H(+) = S-methyl-5'-thioinosine + NH4(+)</text>
        <dbReference type="Rhea" id="RHEA:25025"/>
        <dbReference type="ChEBI" id="CHEBI:15377"/>
        <dbReference type="ChEBI" id="CHEBI:15378"/>
        <dbReference type="ChEBI" id="CHEBI:17509"/>
        <dbReference type="ChEBI" id="CHEBI:28938"/>
        <dbReference type="ChEBI" id="CHEBI:48595"/>
        <dbReference type="EC" id="3.5.4.31"/>
    </reaction>
</comment>
<comment type="cofactor">
    <cofactor evidence="1">
        <name>Zn(2+)</name>
        <dbReference type="ChEBI" id="CHEBI:29105"/>
    </cofactor>
    <text evidence="1">Binds 1 zinc ion per subunit.</text>
</comment>
<comment type="similarity">
    <text evidence="1">Belongs to the metallo-dependent hydrolases superfamily. MTA/SAH deaminase family.</text>
</comment>
<sequence>MIIKNGMIIYGDEFTIVRSDVLIEDGVIKEVGKNIRAPADMVIDASSHLVIPGLINAHTHVSMVLLRGLAEDVPLQEWLQNYIWPRERELKRKDIYWGTLLGLVEMARSGVTTFVDMYFHIEEVAKATIEVGLRGFLGYGMVDLENREKLEVEIKETEKFYEYVTKINSPLVNFVLAPHAPYTCSLECLKWVSKKANQWNVPVTIHLSETKKEVEEIRKKYGMTPTQLLDEVGLLNEKLIAAHGVWLSEEELRMLSSANATVVHCPASNMKLGSGVFPLRKALDLGVNVALGTDGAASNNTLDMLREMRLASLLQKVAHLNPAIVKSEEILKMATVNPAKALGLKSGVIKEGYIADLALINLRRPHLLPLNSPTSLLIYSARGGDVDTLFVNGEIVILDGEFLTVNEEKILDKFLKVIE</sequence>
<keyword id="KW-0378">Hydrolase</keyword>
<keyword id="KW-0479">Metal-binding</keyword>
<keyword id="KW-1185">Reference proteome</keyword>
<keyword id="KW-0862">Zinc</keyword>
<feature type="chain" id="PRO_0000312486" description="5-methylthioadenosine/S-adenosylhomocysteine deaminase">
    <location>
        <begin position="1"/>
        <end position="419"/>
    </location>
</feature>
<feature type="binding site" evidence="1">
    <location>
        <position position="58"/>
    </location>
    <ligand>
        <name>Zn(2+)</name>
        <dbReference type="ChEBI" id="CHEBI:29105"/>
    </ligand>
</feature>
<feature type="binding site" evidence="1">
    <location>
        <position position="60"/>
    </location>
    <ligand>
        <name>Zn(2+)</name>
        <dbReference type="ChEBI" id="CHEBI:29105"/>
    </ligand>
</feature>
<feature type="binding site" evidence="1">
    <location>
        <position position="87"/>
    </location>
    <ligand>
        <name>substrate</name>
    </ligand>
</feature>
<feature type="binding site" evidence="1">
    <location>
        <position position="179"/>
    </location>
    <ligand>
        <name>substrate</name>
    </ligand>
</feature>
<feature type="binding site" evidence="1">
    <location>
        <position position="206"/>
    </location>
    <ligand>
        <name>Zn(2+)</name>
        <dbReference type="ChEBI" id="CHEBI:29105"/>
    </ligand>
</feature>
<feature type="binding site" evidence="1">
    <location>
        <position position="209"/>
    </location>
    <ligand>
        <name>substrate</name>
    </ligand>
</feature>
<feature type="binding site" evidence="1">
    <location>
        <position position="294"/>
    </location>
    <ligand>
        <name>substrate</name>
    </ligand>
</feature>
<feature type="binding site" evidence="1">
    <location>
        <position position="294"/>
    </location>
    <ligand>
        <name>Zn(2+)</name>
        <dbReference type="ChEBI" id="CHEBI:29105"/>
    </ligand>
</feature>
<accession>Q8U0P7</accession>
<protein>
    <recommendedName>
        <fullName evidence="1">5-methylthioadenosine/S-adenosylhomocysteine deaminase</fullName>
        <shortName evidence="1">MTA/SAH deaminase</shortName>
        <ecNumber evidence="1">3.5.4.28</ecNumber>
        <ecNumber evidence="1">3.5.4.31</ecNumber>
    </recommendedName>
</protein>
<name>MTAD_PYRFU</name>
<evidence type="ECO:0000255" key="1">
    <source>
        <dbReference type="HAMAP-Rule" id="MF_01281"/>
    </source>
</evidence>
<reference key="1">
    <citation type="journal article" date="1999" name="Genetics">
        <title>Divergence of the hyperthermophilic archaea Pyrococcus furiosus and P. horikoshii inferred from complete genomic sequences.</title>
        <authorList>
            <person name="Maeder D.L."/>
            <person name="Weiss R.B."/>
            <person name="Dunn D.M."/>
            <person name="Cherry J.L."/>
            <person name="Gonzalez J.M."/>
            <person name="DiRuggiero J."/>
            <person name="Robb F.T."/>
        </authorList>
    </citation>
    <scope>NUCLEOTIDE SEQUENCE [LARGE SCALE GENOMIC DNA]</scope>
    <source>
        <strain>ATCC 43587 / DSM 3638 / JCM 8422 / Vc1</strain>
    </source>
</reference>
<organism>
    <name type="scientific">Pyrococcus furiosus (strain ATCC 43587 / DSM 3638 / JCM 8422 / Vc1)</name>
    <dbReference type="NCBI Taxonomy" id="186497"/>
    <lineage>
        <taxon>Archaea</taxon>
        <taxon>Methanobacteriati</taxon>
        <taxon>Methanobacteriota</taxon>
        <taxon>Thermococci</taxon>
        <taxon>Thermococcales</taxon>
        <taxon>Thermococcaceae</taxon>
        <taxon>Pyrococcus</taxon>
    </lineage>
</organism>
<dbReference type="EC" id="3.5.4.28" evidence="1"/>
<dbReference type="EC" id="3.5.4.31" evidence="1"/>
<dbReference type="EMBL" id="AE009950">
    <property type="protein sequence ID" value="AAL81662.1"/>
    <property type="molecule type" value="Genomic_DNA"/>
</dbReference>
<dbReference type="RefSeq" id="WP_011012685.1">
    <property type="nucleotide sequence ID" value="NZ_CP023154.1"/>
</dbReference>
<dbReference type="SMR" id="Q8U0P7"/>
<dbReference type="STRING" id="186497.PF1538"/>
<dbReference type="PaxDb" id="186497-PF1538"/>
<dbReference type="KEGG" id="pfu:PF1538"/>
<dbReference type="PATRIC" id="fig|186497.12.peg.1603"/>
<dbReference type="eggNOG" id="arCOG00695">
    <property type="taxonomic scope" value="Archaea"/>
</dbReference>
<dbReference type="HOGENOM" id="CLU_012358_2_1_2"/>
<dbReference type="OrthoDB" id="372084at2157"/>
<dbReference type="PhylomeDB" id="Q8U0P7"/>
<dbReference type="Proteomes" id="UP000001013">
    <property type="component" value="Chromosome"/>
</dbReference>
<dbReference type="GO" id="GO:0090614">
    <property type="term" value="F:5'-methylthioadenosine deaminase activity"/>
    <property type="evidence" value="ECO:0007669"/>
    <property type="project" value="UniProtKB-UniRule"/>
</dbReference>
<dbReference type="GO" id="GO:0046872">
    <property type="term" value="F:metal ion binding"/>
    <property type="evidence" value="ECO:0007669"/>
    <property type="project" value="UniProtKB-KW"/>
</dbReference>
<dbReference type="GO" id="GO:0050270">
    <property type="term" value="F:S-adenosylhomocysteine deaminase activity"/>
    <property type="evidence" value="ECO:0007669"/>
    <property type="project" value="UniProtKB-UniRule"/>
</dbReference>
<dbReference type="CDD" id="cd01298">
    <property type="entry name" value="ATZ_TRZ_like"/>
    <property type="match status" value="1"/>
</dbReference>
<dbReference type="FunFam" id="3.20.20.140:FF:000014">
    <property type="entry name" value="5-methylthioadenosine/S-adenosylhomocysteine deaminase"/>
    <property type="match status" value="1"/>
</dbReference>
<dbReference type="Gene3D" id="3.20.20.140">
    <property type="entry name" value="Metal-dependent hydrolases"/>
    <property type="match status" value="1"/>
</dbReference>
<dbReference type="Gene3D" id="2.30.40.10">
    <property type="entry name" value="Urease, subunit C, domain 1"/>
    <property type="match status" value="1"/>
</dbReference>
<dbReference type="HAMAP" id="MF_01281">
    <property type="entry name" value="MTA_SAH_deamin"/>
    <property type="match status" value="1"/>
</dbReference>
<dbReference type="InterPro" id="IPR006680">
    <property type="entry name" value="Amidohydro-rel"/>
</dbReference>
<dbReference type="InterPro" id="IPR023512">
    <property type="entry name" value="Deaminase_MtaD/DadD"/>
</dbReference>
<dbReference type="InterPro" id="IPR011059">
    <property type="entry name" value="Metal-dep_hydrolase_composite"/>
</dbReference>
<dbReference type="InterPro" id="IPR032466">
    <property type="entry name" value="Metal_Hydrolase"/>
</dbReference>
<dbReference type="InterPro" id="IPR050287">
    <property type="entry name" value="MTA/SAH_deaminase"/>
</dbReference>
<dbReference type="NCBIfam" id="NF006252">
    <property type="entry name" value="PRK08393.1"/>
    <property type="match status" value="1"/>
</dbReference>
<dbReference type="PANTHER" id="PTHR43794:SF11">
    <property type="entry name" value="AMIDOHYDROLASE-RELATED DOMAIN-CONTAINING PROTEIN"/>
    <property type="match status" value="1"/>
</dbReference>
<dbReference type="PANTHER" id="PTHR43794">
    <property type="entry name" value="AMINOHYDROLASE SSNA-RELATED"/>
    <property type="match status" value="1"/>
</dbReference>
<dbReference type="Pfam" id="PF01979">
    <property type="entry name" value="Amidohydro_1"/>
    <property type="match status" value="1"/>
</dbReference>
<dbReference type="SUPFAM" id="SSF51338">
    <property type="entry name" value="Composite domain of metallo-dependent hydrolases"/>
    <property type="match status" value="1"/>
</dbReference>
<dbReference type="SUPFAM" id="SSF51556">
    <property type="entry name" value="Metallo-dependent hydrolases"/>
    <property type="match status" value="1"/>
</dbReference>
<proteinExistence type="inferred from homology"/>